<organism>
    <name type="scientific">Atractylodes lancea</name>
    <name type="common">Atractylodes japonica</name>
    <dbReference type="NCBI Taxonomy" id="41486"/>
    <lineage>
        <taxon>Eukaryota</taxon>
        <taxon>Viridiplantae</taxon>
        <taxon>Streptophyta</taxon>
        <taxon>Embryophyta</taxon>
        <taxon>Tracheophyta</taxon>
        <taxon>Spermatophyta</taxon>
        <taxon>Magnoliopsida</taxon>
        <taxon>eudicotyledons</taxon>
        <taxon>Gunneridae</taxon>
        <taxon>Pentapetalae</taxon>
        <taxon>asterids</taxon>
        <taxon>campanulids</taxon>
        <taxon>Asterales</taxon>
        <taxon>Asteraceae</taxon>
        <taxon>Carduoideae</taxon>
        <taxon>Cardueae</taxon>
        <taxon>Carlininae</taxon>
        <taxon>Atractylodes</taxon>
    </lineage>
</organism>
<gene>
    <name type="primary">ndhF</name>
</gene>
<accession>P51099</accession>
<dbReference type="EC" id="7.1.1.-"/>
<dbReference type="EMBL" id="L39413">
    <property type="protein sequence ID" value="AAC37727.1"/>
    <property type="molecule type" value="Genomic_DNA"/>
</dbReference>
<dbReference type="PIR" id="T12623">
    <property type="entry name" value="T12623"/>
</dbReference>
<dbReference type="SMR" id="P51099"/>
<dbReference type="GO" id="GO:0009535">
    <property type="term" value="C:chloroplast thylakoid membrane"/>
    <property type="evidence" value="ECO:0007669"/>
    <property type="project" value="UniProtKB-SubCell"/>
</dbReference>
<dbReference type="GO" id="GO:0008137">
    <property type="term" value="F:NADH dehydrogenase (ubiquinone) activity"/>
    <property type="evidence" value="ECO:0007669"/>
    <property type="project" value="InterPro"/>
</dbReference>
<dbReference type="GO" id="GO:0048038">
    <property type="term" value="F:quinone binding"/>
    <property type="evidence" value="ECO:0007669"/>
    <property type="project" value="UniProtKB-KW"/>
</dbReference>
<dbReference type="GO" id="GO:0042773">
    <property type="term" value="P:ATP synthesis coupled electron transport"/>
    <property type="evidence" value="ECO:0007669"/>
    <property type="project" value="InterPro"/>
</dbReference>
<dbReference type="GO" id="GO:0015990">
    <property type="term" value="P:electron transport coupled proton transport"/>
    <property type="evidence" value="ECO:0007669"/>
    <property type="project" value="TreeGrafter"/>
</dbReference>
<dbReference type="Gene3D" id="1.20.5.2700">
    <property type="match status" value="1"/>
</dbReference>
<dbReference type="InterPro" id="IPR002128">
    <property type="entry name" value="NADH_UbQ_OxRdtase_chlpt_su5_C"/>
</dbReference>
<dbReference type="InterPro" id="IPR018393">
    <property type="entry name" value="NADHpl_OxRdtase_5_subgr"/>
</dbReference>
<dbReference type="InterPro" id="IPR001750">
    <property type="entry name" value="ND/Mrp_TM"/>
</dbReference>
<dbReference type="InterPro" id="IPR003945">
    <property type="entry name" value="NU5C-like"/>
</dbReference>
<dbReference type="InterPro" id="IPR001516">
    <property type="entry name" value="Proton_antipo_N"/>
</dbReference>
<dbReference type="NCBIfam" id="TIGR01974">
    <property type="entry name" value="NDH_I_L"/>
    <property type="match status" value="1"/>
</dbReference>
<dbReference type="NCBIfam" id="NF005141">
    <property type="entry name" value="PRK06590.1"/>
    <property type="match status" value="1"/>
</dbReference>
<dbReference type="PANTHER" id="PTHR42829">
    <property type="entry name" value="NADH-UBIQUINONE OXIDOREDUCTASE CHAIN 5"/>
    <property type="match status" value="1"/>
</dbReference>
<dbReference type="PANTHER" id="PTHR42829:SF2">
    <property type="entry name" value="NADH-UBIQUINONE OXIDOREDUCTASE CHAIN 5"/>
    <property type="match status" value="1"/>
</dbReference>
<dbReference type="Pfam" id="PF01010">
    <property type="entry name" value="Proton_antipo_C"/>
    <property type="match status" value="1"/>
</dbReference>
<dbReference type="Pfam" id="PF00361">
    <property type="entry name" value="Proton_antipo_M"/>
    <property type="match status" value="1"/>
</dbReference>
<dbReference type="Pfam" id="PF00662">
    <property type="entry name" value="Proton_antipo_N"/>
    <property type="match status" value="1"/>
</dbReference>
<dbReference type="PRINTS" id="PR01434">
    <property type="entry name" value="NADHDHGNASE5"/>
</dbReference>
<dbReference type="PRINTS" id="PR01435">
    <property type="entry name" value="NPOXDRDTASE5"/>
</dbReference>
<proteinExistence type="inferred from homology"/>
<evidence type="ECO:0000250" key="1"/>
<evidence type="ECO:0000255" key="2"/>
<evidence type="ECO:0000305" key="3"/>
<reference key="1">
    <citation type="journal article" date="1995" name="Proc. Natl. Acad. Sci. U.S.A.">
        <title>ndhF sequence evolution and the major clades in the sunflower family.</title>
        <authorList>
            <person name="Kim K.-J."/>
            <person name="Jansen R.K."/>
        </authorList>
    </citation>
    <scope>NUCLEOTIDE SEQUENCE [GENOMIC DNA]</scope>
</reference>
<geneLocation type="chloroplast"/>
<keyword id="KW-0150">Chloroplast</keyword>
<keyword id="KW-0472">Membrane</keyword>
<keyword id="KW-0520">NAD</keyword>
<keyword id="KW-0521">NADP</keyword>
<keyword id="KW-0934">Plastid</keyword>
<keyword id="KW-0618">Plastoquinone</keyword>
<keyword id="KW-0874">Quinone</keyword>
<keyword id="KW-0793">Thylakoid</keyword>
<keyword id="KW-1278">Translocase</keyword>
<keyword id="KW-0812">Transmembrane</keyword>
<keyword id="KW-1133">Transmembrane helix</keyword>
<keyword id="KW-0813">Transport</keyword>
<comment type="function">
    <text evidence="1">NDH shuttles electrons from NAD(P)H:plastoquinone, via FMN and iron-sulfur (Fe-S) centers, to quinones in the photosynthetic chain and possibly in a chloroplast respiratory chain. The immediate electron acceptor for the enzyme in this species is believed to be plastoquinone. Couples the redox reaction to proton translocation, and thus conserves the redox energy in a proton gradient (By similarity).</text>
</comment>
<comment type="catalytic activity">
    <reaction>
        <text>a plastoquinone + NADH + (n+1) H(+)(in) = a plastoquinol + NAD(+) + n H(+)(out)</text>
        <dbReference type="Rhea" id="RHEA:42608"/>
        <dbReference type="Rhea" id="RHEA-COMP:9561"/>
        <dbReference type="Rhea" id="RHEA-COMP:9562"/>
        <dbReference type="ChEBI" id="CHEBI:15378"/>
        <dbReference type="ChEBI" id="CHEBI:17757"/>
        <dbReference type="ChEBI" id="CHEBI:57540"/>
        <dbReference type="ChEBI" id="CHEBI:57945"/>
        <dbReference type="ChEBI" id="CHEBI:62192"/>
    </reaction>
</comment>
<comment type="catalytic activity">
    <reaction>
        <text>a plastoquinone + NADPH + (n+1) H(+)(in) = a plastoquinol + NADP(+) + n H(+)(out)</text>
        <dbReference type="Rhea" id="RHEA:42612"/>
        <dbReference type="Rhea" id="RHEA-COMP:9561"/>
        <dbReference type="Rhea" id="RHEA-COMP:9562"/>
        <dbReference type="ChEBI" id="CHEBI:15378"/>
        <dbReference type="ChEBI" id="CHEBI:17757"/>
        <dbReference type="ChEBI" id="CHEBI:57783"/>
        <dbReference type="ChEBI" id="CHEBI:58349"/>
        <dbReference type="ChEBI" id="CHEBI:62192"/>
    </reaction>
</comment>
<comment type="subunit">
    <text evidence="1">NDH is composed of at least 16 different subunits, 5 of which are encoded in the nucleus.</text>
</comment>
<comment type="subcellular location">
    <subcellularLocation>
        <location evidence="1">Plastid</location>
        <location evidence="1">Chloroplast thylakoid membrane</location>
        <topology evidence="1">Multi-pass membrane protein</topology>
    </subcellularLocation>
</comment>
<comment type="similarity">
    <text evidence="3">Belongs to the complex I subunit 5 family.</text>
</comment>
<sequence>MEQTYQYAWIIPFLPLPVPMLIGLGLLLFPTATKSLRRMWAFQSVLLLSIVMIFSMNLSIQQINSSSVYQYVWSWIINNDFSLEFGYLIDPLTSIMLILITTVGIMVLIYSDNYMSHDHGYLRFFAYMSFFSTSMLGLVTSSNLIQIYIFWELVGICSYLLIGFWFTRPVAAKACQKAFVTNRVGDFGLLLGILGFYWITGSFEFRDLFQIFNNLISNNEVNFVFVTLCAVLLFAGAVAKSAQFPLHVWLPDAMEGPTPISALIHAATMVAAGIFLVARLLPLFIVIPHIMNFISLIGIITVFLGATLALAQKDIKRGLAYSTMSQLGYMMLALGMGSYRSALFHLITHAYSKALLFLGSGSVIHSMETLVGYCPKKSQNMVLMGGLTKHVPITKTSFLLGTLSLCGIPPLACFWSKDEILNDSWLYSPIFAIIAWSTAGLTAFYMCRIYLLTFEGHLNVHFQNYSGKKNTPFYSISLWGKDGSKISNKNFRLVTLLKMKKNGRASFFSNKVYKIDDNVRNMIQPFLSIPHFGNTKTYSYPSESDNTMLFPILILILFTLFVGFLGIPFNQDGVNLDILSKWLTPSINLLHKNSNNSIDWYEFFKDAVFSVSIASFGIFIAFFLYKPVYSSFQNLDLINSFVKMGPKRIFSDKIKNGIYDWSYNRGYIDAFYGTFLTVGMRKLAEFAHFFDRRIIDGIPNGVCLISFFVAEVIKSVGGGRISSYLFFYFSYVSIFLLIYYFLNVFQNIS</sequence>
<name>NU5C_ATRLA</name>
<protein>
    <recommendedName>
        <fullName>NAD(P)H-quinone oxidoreductase subunit 5, chloroplastic</fullName>
        <ecNumber>7.1.1.-</ecNumber>
    </recommendedName>
    <alternativeName>
        <fullName>NAD(P)H dehydrogenase subunit 5</fullName>
    </alternativeName>
    <alternativeName>
        <fullName>NADH-plastoquinone oxidoreductase subunit 5</fullName>
    </alternativeName>
</protein>
<feature type="chain" id="PRO_0000118173" description="NAD(P)H-quinone oxidoreductase subunit 5, chloroplastic">
    <location>
        <begin position="1"/>
        <end position="749"/>
    </location>
</feature>
<feature type="transmembrane region" description="Helical" evidence="2">
    <location>
        <begin position="9"/>
        <end position="29"/>
    </location>
</feature>
<feature type="transmembrane region" description="Helical" evidence="2">
    <location>
        <begin position="40"/>
        <end position="60"/>
    </location>
</feature>
<feature type="transmembrane region" description="Helical" evidence="2">
    <location>
        <begin position="89"/>
        <end position="109"/>
    </location>
</feature>
<feature type="transmembrane region" description="Helical" evidence="2">
    <location>
        <begin position="125"/>
        <end position="145"/>
    </location>
</feature>
<feature type="transmembrane region" description="Helical" evidence="2">
    <location>
        <begin position="147"/>
        <end position="167"/>
    </location>
</feature>
<feature type="transmembrane region" description="Helical" evidence="2">
    <location>
        <begin position="185"/>
        <end position="205"/>
    </location>
</feature>
<feature type="transmembrane region" description="Helical" evidence="2">
    <location>
        <begin position="219"/>
        <end position="239"/>
    </location>
</feature>
<feature type="transmembrane region" description="Helical" evidence="2">
    <location>
        <begin position="258"/>
        <end position="278"/>
    </location>
</feature>
<feature type="transmembrane region" description="Helical" evidence="2">
    <location>
        <begin position="290"/>
        <end position="312"/>
    </location>
</feature>
<feature type="transmembrane region" description="Helical" evidence="2">
    <location>
        <begin position="327"/>
        <end position="347"/>
    </location>
</feature>
<feature type="transmembrane region" description="Helical" evidence="2">
    <location>
        <begin position="354"/>
        <end position="374"/>
    </location>
</feature>
<feature type="transmembrane region" description="Helical" evidence="2">
    <location>
        <begin position="396"/>
        <end position="416"/>
    </location>
</feature>
<feature type="transmembrane region" description="Helical" evidence="2">
    <location>
        <begin position="425"/>
        <end position="445"/>
    </location>
</feature>
<feature type="transmembrane region" description="Helical" evidence="2">
    <location>
        <begin position="549"/>
        <end position="569"/>
    </location>
</feature>
<feature type="transmembrane region" description="Helical" evidence="2">
    <location>
        <begin position="608"/>
        <end position="628"/>
    </location>
</feature>
<feature type="transmembrane region" description="Helical" evidence="2">
    <location>
        <begin position="694"/>
        <end position="714"/>
    </location>
</feature>
<feature type="transmembrane region" description="Helical" evidence="2">
    <location>
        <begin position="725"/>
        <end position="745"/>
    </location>
</feature>